<name>IF2_FRACC</name>
<proteinExistence type="inferred from homology"/>
<feature type="chain" id="PRO_0000335472" description="Translation initiation factor IF-2">
    <location>
        <begin position="1"/>
        <end position="1062"/>
    </location>
</feature>
<feature type="domain" description="tr-type G">
    <location>
        <begin position="555"/>
        <end position="727"/>
    </location>
</feature>
<feature type="region of interest" description="Disordered" evidence="3">
    <location>
        <begin position="34"/>
        <end position="463"/>
    </location>
</feature>
<feature type="region of interest" description="G1" evidence="1">
    <location>
        <begin position="564"/>
        <end position="571"/>
    </location>
</feature>
<feature type="region of interest" description="G2" evidence="1">
    <location>
        <begin position="589"/>
        <end position="593"/>
    </location>
</feature>
<feature type="region of interest" description="G3" evidence="1">
    <location>
        <begin position="614"/>
        <end position="617"/>
    </location>
</feature>
<feature type="region of interest" description="G4" evidence="1">
    <location>
        <begin position="668"/>
        <end position="671"/>
    </location>
</feature>
<feature type="region of interest" description="G5" evidence="1">
    <location>
        <begin position="704"/>
        <end position="706"/>
    </location>
</feature>
<feature type="compositionally biased region" description="Pro residues" evidence="3">
    <location>
        <begin position="76"/>
        <end position="121"/>
    </location>
</feature>
<feature type="compositionally biased region" description="Low complexity" evidence="3">
    <location>
        <begin position="122"/>
        <end position="153"/>
    </location>
</feature>
<feature type="compositionally biased region" description="Pro residues" evidence="3">
    <location>
        <begin position="154"/>
        <end position="178"/>
    </location>
</feature>
<feature type="compositionally biased region" description="Gly residues" evidence="3">
    <location>
        <begin position="198"/>
        <end position="214"/>
    </location>
</feature>
<feature type="compositionally biased region" description="Pro residues" evidence="3">
    <location>
        <begin position="294"/>
        <end position="305"/>
    </location>
</feature>
<feature type="compositionally biased region" description="Gly residues" evidence="3">
    <location>
        <begin position="307"/>
        <end position="324"/>
    </location>
</feature>
<feature type="compositionally biased region" description="Gly residues" evidence="3">
    <location>
        <begin position="344"/>
        <end position="430"/>
    </location>
</feature>
<feature type="compositionally biased region" description="Basic residues" evidence="3">
    <location>
        <begin position="431"/>
        <end position="442"/>
    </location>
</feature>
<feature type="binding site" evidence="2">
    <location>
        <begin position="564"/>
        <end position="571"/>
    </location>
    <ligand>
        <name>GTP</name>
        <dbReference type="ChEBI" id="CHEBI:37565"/>
    </ligand>
</feature>
<feature type="binding site" evidence="2">
    <location>
        <begin position="614"/>
        <end position="618"/>
    </location>
    <ligand>
        <name>GTP</name>
        <dbReference type="ChEBI" id="CHEBI:37565"/>
    </ligand>
</feature>
<feature type="binding site" evidence="2">
    <location>
        <begin position="668"/>
        <end position="671"/>
    </location>
    <ligand>
        <name>GTP</name>
        <dbReference type="ChEBI" id="CHEBI:37565"/>
    </ligand>
</feature>
<reference key="1">
    <citation type="journal article" date="2007" name="Genome Res.">
        <title>Genome characteristics of facultatively symbiotic Frankia sp. strains reflect host range and host plant biogeography.</title>
        <authorList>
            <person name="Normand P."/>
            <person name="Lapierre P."/>
            <person name="Tisa L.S."/>
            <person name="Gogarten J.P."/>
            <person name="Alloisio N."/>
            <person name="Bagnarol E."/>
            <person name="Bassi C.A."/>
            <person name="Berry A.M."/>
            <person name="Bickhart D.M."/>
            <person name="Choisne N."/>
            <person name="Couloux A."/>
            <person name="Cournoyer B."/>
            <person name="Cruveiller S."/>
            <person name="Daubin V."/>
            <person name="Demange N."/>
            <person name="Francino M.P."/>
            <person name="Goltsman E."/>
            <person name="Huang Y."/>
            <person name="Kopp O.R."/>
            <person name="Labarre L."/>
            <person name="Lapidus A."/>
            <person name="Lavire C."/>
            <person name="Marechal J."/>
            <person name="Martinez M."/>
            <person name="Mastronunzio J.E."/>
            <person name="Mullin B.C."/>
            <person name="Niemann J."/>
            <person name="Pujic P."/>
            <person name="Rawnsley T."/>
            <person name="Rouy Z."/>
            <person name="Schenowitz C."/>
            <person name="Sellstedt A."/>
            <person name="Tavares F."/>
            <person name="Tomkins J.P."/>
            <person name="Vallenet D."/>
            <person name="Valverde C."/>
            <person name="Wall L.G."/>
            <person name="Wang Y."/>
            <person name="Medigue C."/>
            <person name="Benson D.R."/>
        </authorList>
    </citation>
    <scope>NUCLEOTIDE SEQUENCE [LARGE SCALE GENOMIC DNA]</scope>
    <source>
        <strain>DSM 45818 / CECT 9043 / HFP020203 / CcI3</strain>
    </source>
</reference>
<evidence type="ECO:0000250" key="1"/>
<evidence type="ECO:0000255" key="2">
    <source>
        <dbReference type="HAMAP-Rule" id="MF_00100"/>
    </source>
</evidence>
<evidence type="ECO:0000256" key="3">
    <source>
        <dbReference type="SAM" id="MobiDB-lite"/>
    </source>
</evidence>
<gene>
    <name evidence="2" type="primary">infB</name>
    <name type="ordered locus">Francci3_3562</name>
</gene>
<sequence>MAGKARVHELAKELGVDSKTVLAKLKDLGEFVKSASSTVEAPVVRKLKEAFPADGAPTSPGRATSRPGPPGGGARPTPPSRPGLAPRPGPRPVPGRPGPLGRPGPATPAPSPSPASPPLPASPVQASPVQASPVQASPTSAPAAPRPAAASAVPAPPMPSVPSAPSGPRPGPNAPRPGAPQGGGRPRPGTPVPPSGPTAGGPTAGGPTAGGPTAGGPRPGPRPGPRSAAPGNNPYTTPSAGPRPSAGPRPSAGQSGPPSTPTPRPSAPRSGTPRPGTPRPGGPRPGGTGAGGPRPTPGGMPPRPGGPRSGAGGGMPPRPGGTGGPRPNANMFQPRPAGGPPGRPGGGGAPGRPGGGGAPGRPGGGGGPRPGGFAGRGGAPGRPGGGGGGGGAPGRPGGGGGGGGAPGRPAAGGRGRGGTTAGAFGPGGRGRPGRQRKSKRAKRQEWESGLEAPRMGAMVPRGNGQAIRLPRGASLADFADKIDANPGALVQVVFTQLGEMVTATQSCTDETLQLLGVTLGYEVQIVSPEDEDKELLESFDLSFGGEYGDDVELSSRPPVVTVMGHVDHGKTKLLDAIRSTDVVGGEAGGITQHIGAYQVRAKVDGDERPITFIDTPGHETFTAMRARGAQVTDIVVLVVAADDGVKPQTIEALNHAQAAGVPVVVAVNKVDKEGADPAKVRGQLTEYGLVAEEYGGDTMFVDVSARNRTNIDGLLEAIVLTADASLDLRAPTEVEAQGVAIEGRLDRGRGPVATVLVQRGTLRVGDSVVAGEAFGRVRAMLDEHGGQVVEAGPARPVQVLGFTSVPDAGDNFLVVPEDRVARQIAERRQARERNAELALSRGRPTLETILERMKEGEKTQLNLILKGDVSGSVEALEDALLKIDVGDEVGLRIIDRGVGAITETNVMLASASDAIIIGFNVRPQGKATELADREGVEVRYYSVIYQAIEDIENALKGMLKPVYEEAQLGTAEVREVFRVPRIGNVAGSLVRSGVIRRNTKARLIRDGVVVADNLTVESLKRFKDDATEVREGYECGIGLGSFNDIKIDDVIETFEQREVPRA</sequence>
<keyword id="KW-0963">Cytoplasm</keyword>
<keyword id="KW-0342">GTP-binding</keyword>
<keyword id="KW-0396">Initiation factor</keyword>
<keyword id="KW-0547">Nucleotide-binding</keyword>
<keyword id="KW-0648">Protein biosynthesis</keyword>
<keyword id="KW-1185">Reference proteome</keyword>
<accession>Q2J728</accession>
<dbReference type="EMBL" id="CP000249">
    <property type="protein sequence ID" value="ABD12914.1"/>
    <property type="molecule type" value="Genomic_DNA"/>
</dbReference>
<dbReference type="RefSeq" id="WP_011437938.1">
    <property type="nucleotide sequence ID" value="NC_007777.1"/>
</dbReference>
<dbReference type="SMR" id="Q2J728"/>
<dbReference type="STRING" id="106370.Francci3_3562"/>
<dbReference type="KEGG" id="fra:Francci3_3562"/>
<dbReference type="eggNOG" id="COG0532">
    <property type="taxonomic scope" value="Bacteria"/>
</dbReference>
<dbReference type="HOGENOM" id="CLU_006301_9_4_11"/>
<dbReference type="OrthoDB" id="9811804at2"/>
<dbReference type="PhylomeDB" id="Q2J728"/>
<dbReference type="Proteomes" id="UP000001937">
    <property type="component" value="Chromosome"/>
</dbReference>
<dbReference type="GO" id="GO:0005829">
    <property type="term" value="C:cytosol"/>
    <property type="evidence" value="ECO:0007669"/>
    <property type="project" value="TreeGrafter"/>
</dbReference>
<dbReference type="GO" id="GO:0005525">
    <property type="term" value="F:GTP binding"/>
    <property type="evidence" value="ECO:0007669"/>
    <property type="project" value="UniProtKB-KW"/>
</dbReference>
<dbReference type="GO" id="GO:0003924">
    <property type="term" value="F:GTPase activity"/>
    <property type="evidence" value="ECO:0007669"/>
    <property type="project" value="UniProtKB-UniRule"/>
</dbReference>
<dbReference type="GO" id="GO:0003743">
    <property type="term" value="F:translation initiation factor activity"/>
    <property type="evidence" value="ECO:0007669"/>
    <property type="project" value="UniProtKB-UniRule"/>
</dbReference>
<dbReference type="CDD" id="cd01887">
    <property type="entry name" value="IF2_eIF5B"/>
    <property type="match status" value="1"/>
</dbReference>
<dbReference type="CDD" id="cd03702">
    <property type="entry name" value="IF2_mtIF2_II"/>
    <property type="match status" value="1"/>
</dbReference>
<dbReference type="CDD" id="cd03692">
    <property type="entry name" value="mtIF2_IVc"/>
    <property type="match status" value="1"/>
</dbReference>
<dbReference type="FunFam" id="1.10.10.2480:FF:000003">
    <property type="entry name" value="Translation initiation factor IF-2"/>
    <property type="match status" value="1"/>
</dbReference>
<dbReference type="FunFam" id="2.40.30.10:FF:000007">
    <property type="entry name" value="Translation initiation factor IF-2"/>
    <property type="match status" value="1"/>
</dbReference>
<dbReference type="FunFam" id="2.40.30.10:FF:000008">
    <property type="entry name" value="Translation initiation factor IF-2"/>
    <property type="match status" value="1"/>
</dbReference>
<dbReference type="FunFam" id="3.40.50.10050:FF:000001">
    <property type="entry name" value="Translation initiation factor IF-2"/>
    <property type="match status" value="1"/>
</dbReference>
<dbReference type="FunFam" id="3.40.50.300:FF:000019">
    <property type="entry name" value="Translation initiation factor IF-2"/>
    <property type="match status" value="1"/>
</dbReference>
<dbReference type="Gene3D" id="1.10.10.2480">
    <property type="match status" value="1"/>
</dbReference>
<dbReference type="Gene3D" id="3.40.50.300">
    <property type="entry name" value="P-loop containing nucleotide triphosphate hydrolases"/>
    <property type="match status" value="1"/>
</dbReference>
<dbReference type="Gene3D" id="2.40.30.10">
    <property type="entry name" value="Translation factors"/>
    <property type="match status" value="2"/>
</dbReference>
<dbReference type="Gene3D" id="3.40.50.10050">
    <property type="entry name" value="Translation initiation factor IF- 2, domain 3"/>
    <property type="match status" value="1"/>
</dbReference>
<dbReference type="HAMAP" id="MF_00100_B">
    <property type="entry name" value="IF_2_B"/>
    <property type="match status" value="1"/>
</dbReference>
<dbReference type="InterPro" id="IPR053905">
    <property type="entry name" value="EF-G-like_DII"/>
</dbReference>
<dbReference type="InterPro" id="IPR044145">
    <property type="entry name" value="IF2_II"/>
</dbReference>
<dbReference type="InterPro" id="IPR006847">
    <property type="entry name" value="IF2_N"/>
</dbReference>
<dbReference type="InterPro" id="IPR027417">
    <property type="entry name" value="P-loop_NTPase"/>
</dbReference>
<dbReference type="InterPro" id="IPR005225">
    <property type="entry name" value="Small_GTP-bd"/>
</dbReference>
<dbReference type="InterPro" id="IPR000795">
    <property type="entry name" value="T_Tr_GTP-bd_dom"/>
</dbReference>
<dbReference type="InterPro" id="IPR000178">
    <property type="entry name" value="TF_IF2_bacterial-like"/>
</dbReference>
<dbReference type="InterPro" id="IPR015760">
    <property type="entry name" value="TIF_IF2"/>
</dbReference>
<dbReference type="InterPro" id="IPR023115">
    <property type="entry name" value="TIF_IF2_dom3"/>
</dbReference>
<dbReference type="InterPro" id="IPR036925">
    <property type="entry name" value="TIF_IF2_dom3_sf"/>
</dbReference>
<dbReference type="InterPro" id="IPR009000">
    <property type="entry name" value="Transl_B-barrel_sf"/>
</dbReference>
<dbReference type="NCBIfam" id="TIGR00487">
    <property type="entry name" value="IF-2"/>
    <property type="match status" value="1"/>
</dbReference>
<dbReference type="NCBIfam" id="TIGR00231">
    <property type="entry name" value="small_GTP"/>
    <property type="match status" value="1"/>
</dbReference>
<dbReference type="PANTHER" id="PTHR43381:SF5">
    <property type="entry name" value="TR-TYPE G DOMAIN-CONTAINING PROTEIN"/>
    <property type="match status" value="1"/>
</dbReference>
<dbReference type="PANTHER" id="PTHR43381">
    <property type="entry name" value="TRANSLATION INITIATION FACTOR IF-2-RELATED"/>
    <property type="match status" value="1"/>
</dbReference>
<dbReference type="Pfam" id="PF22042">
    <property type="entry name" value="EF-G_D2"/>
    <property type="match status" value="1"/>
</dbReference>
<dbReference type="Pfam" id="PF00009">
    <property type="entry name" value="GTP_EFTU"/>
    <property type="match status" value="1"/>
</dbReference>
<dbReference type="Pfam" id="PF11987">
    <property type="entry name" value="IF-2"/>
    <property type="match status" value="1"/>
</dbReference>
<dbReference type="Pfam" id="PF04760">
    <property type="entry name" value="IF2_N"/>
    <property type="match status" value="1"/>
</dbReference>
<dbReference type="PRINTS" id="PR00315">
    <property type="entry name" value="ELONGATNFCT"/>
</dbReference>
<dbReference type="SUPFAM" id="SSF52156">
    <property type="entry name" value="Initiation factor IF2/eIF5b, domain 3"/>
    <property type="match status" value="1"/>
</dbReference>
<dbReference type="SUPFAM" id="SSF52540">
    <property type="entry name" value="P-loop containing nucleoside triphosphate hydrolases"/>
    <property type="match status" value="1"/>
</dbReference>
<dbReference type="SUPFAM" id="SSF50447">
    <property type="entry name" value="Translation proteins"/>
    <property type="match status" value="2"/>
</dbReference>
<dbReference type="PROSITE" id="PS51722">
    <property type="entry name" value="G_TR_2"/>
    <property type="match status" value="1"/>
</dbReference>
<dbReference type="PROSITE" id="PS01176">
    <property type="entry name" value="IF2"/>
    <property type="match status" value="1"/>
</dbReference>
<comment type="function">
    <text evidence="2">One of the essential components for the initiation of protein synthesis. Protects formylmethionyl-tRNA from spontaneous hydrolysis and promotes its binding to the 30S ribosomal subunits. Also involved in the hydrolysis of GTP during the formation of the 70S ribosomal complex.</text>
</comment>
<comment type="subcellular location">
    <subcellularLocation>
        <location evidence="2">Cytoplasm</location>
    </subcellularLocation>
</comment>
<comment type="similarity">
    <text evidence="2">Belongs to the TRAFAC class translation factor GTPase superfamily. Classic translation factor GTPase family. IF-2 subfamily.</text>
</comment>
<protein>
    <recommendedName>
        <fullName evidence="2">Translation initiation factor IF-2</fullName>
    </recommendedName>
</protein>
<organism>
    <name type="scientific">Frankia casuarinae (strain DSM 45818 / CECT 9043 / HFP020203 / CcI3)</name>
    <dbReference type="NCBI Taxonomy" id="106370"/>
    <lineage>
        <taxon>Bacteria</taxon>
        <taxon>Bacillati</taxon>
        <taxon>Actinomycetota</taxon>
        <taxon>Actinomycetes</taxon>
        <taxon>Frankiales</taxon>
        <taxon>Frankiaceae</taxon>
        <taxon>Frankia</taxon>
    </lineage>
</organism>